<organism>
    <name type="scientific">Shewanella sp. (strain MR-4)</name>
    <dbReference type="NCBI Taxonomy" id="60480"/>
    <lineage>
        <taxon>Bacteria</taxon>
        <taxon>Pseudomonadati</taxon>
        <taxon>Pseudomonadota</taxon>
        <taxon>Gammaproteobacteria</taxon>
        <taxon>Alteromonadales</taxon>
        <taxon>Shewanellaceae</taxon>
        <taxon>Shewanella</taxon>
    </lineage>
</organism>
<comment type="similarity">
    <text evidence="1">Belongs to the UPF0227 family.</text>
</comment>
<accession>Q0HJG6</accession>
<gene>
    <name type="ordered locus">Shewmr4_1727</name>
</gene>
<protein>
    <recommendedName>
        <fullName evidence="1">UPF0227 protein Shewmr4_1727</fullName>
    </recommendedName>
</protein>
<sequence>MIFYLHGFDATSPGNHEKMRQLQFIDPDVRLISYSTLHPKHDMQHLLKEVAKQMQYCDDPAPLMVGVGLGAYWAERIGFLNGLKSVLINPNLHPEETMQGKIDRPEEYADIANKCVSEFRLKNTHKAMCILSRVDEVLDSEATAEALKPYYTIEWDETQTHKFPQLAAHLPKIKAFKLG</sequence>
<dbReference type="EMBL" id="CP000446">
    <property type="protein sequence ID" value="ABI38801.1"/>
    <property type="molecule type" value="Genomic_DNA"/>
</dbReference>
<dbReference type="RefSeq" id="WP_011622501.1">
    <property type="nucleotide sequence ID" value="NC_008321.1"/>
</dbReference>
<dbReference type="SMR" id="Q0HJG6"/>
<dbReference type="ESTHER" id="shesm-y1727">
    <property type="family name" value="abh_upf00227"/>
</dbReference>
<dbReference type="KEGG" id="she:Shewmr4_1727"/>
<dbReference type="HOGENOM" id="CLU_128769_0_0_6"/>
<dbReference type="Gene3D" id="3.40.50.1820">
    <property type="entry name" value="alpha/beta hydrolase"/>
    <property type="match status" value="1"/>
</dbReference>
<dbReference type="HAMAP" id="MF_01047">
    <property type="entry name" value="UPF0227"/>
    <property type="match status" value="1"/>
</dbReference>
<dbReference type="InterPro" id="IPR029058">
    <property type="entry name" value="AB_hydrolase_fold"/>
</dbReference>
<dbReference type="InterPro" id="IPR022987">
    <property type="entry name" value="UPF0227"/>
</dbReference>
<dbReference type="InterPro" id="IPR008886">
    <property type="entry name" value="UPF0227/Esterase_YqiA"/>
</dbReference>
<dbReference type="NCBIfam" id="NF003431">
    <property type="entry name" value="PRK04940.1"/>
    <property type="match status" value="1"/>
</dbReference>
<dbReference type="PANTHER" id="PTHR35602">
    <property type="entry name" value="ESTERASE YQIA-RELATED"/>
    <property type="match status" value="1"/>
</dbReference>
<dbReference type="PANTHER" id="PTHR35602:SF2">
    <property type="entry name" value="UPF0227 PROTEIN YCFP"/>
    <property type="match status" value="1"/>
</dbReference>
<dbReference type="Pfam" id="PF05728">
    <property type="entry name" value="UPF0227"/>
    <property type="match status" value="1"/>
</dbReference>
<feature type="chain" id="PRO_1000064300" description="UPF0227 protein Shewmr4_1727">
    <location>
        <begin position="1"/>
        <end position="179"/>
    </location>
</feature>
<name>Y1727_SHESM</name>
<reference key="1">
    <citation type="submission" date="2006-08" db="EMBL/GenBank/DDBJ databases">
        <title>Complete sequence of Shewanella sp. MR-4.</title>
        <authorList>
            <consortium name="US DOE Joint Genome Institute"/>
            <person name="Copeland A."/>
            <person name="Lucas S."/>
            <person name="Lapidus A."/>
            <person name="Barry K."/>
            <person name="Detter J.C."/>
            <person name="Glavina del Rio T."/>
            <person name="Hammon N."/>
            <person name="Israni S."/>
            <person name="Dalin E."/>
            <person name="Tice H."/>
            <person name="Pitluck S."/>
            <person name="Kiss H."/>
            <person name="Brettin T."/>
            <person name="Bruce D."/>
            <person name="Han C."/>
            <person name="Tapia R."/>
            <person name="Gilna P."/>
            <person name="Schmutz J."/>
            <person name="Larimer F."/>
            <person name="Land M."/>
            <person name="Hauser L."/>
            <person name="Kyrpides N."/>
            <person name="Mikhailova N."/>
            <person name="Nealson K."/>
            <person name="Konstantinidis K."/>
            <person name="Klappenbach J."/>
            <person name="Tiedje J."/>
            <person name="Richardson P."/>
        </authorList>
    </citation>
    <scope>NUCLEOTIDE SEQUENCE [LARGE SCALE GENOMIC DNA]</scope>
    <source>
        <strain>MR-4</strain>
    </source>
</reference>
<evidence type="ECO:0000255" key="1">
    <source>
        <dbReference type="HAMAP-Rule" id="MF_01047"/>
    </source>
</evidence>
<proteinExistence type="inferred from homology"/>